<accession>Q9HDZ3</accession>
<comment type="function">
    <text evidence="2">Has a role in meiosis.</text>
</comment>
<comment type="subcellular location">
    <subcellularLocation>
        <location evidence="3">Mitochondrion</location>
    </subcellularLocation>
</comment>
<comment type="similarity">
    <text evidence="4">Belongs to the prokaryotic/mitochondrial release factor family.</text>
</comment>
<feature type="chain" id="PRO_0000278567" description="Meiotically up-regulated gene 82 protein">
    <location>
        <begin position="1"/>
        <end position="182"/>
    </location>
</feature>
<feature type="region of interest" description="Disordered" evidence="1">
    <location>
        <begin position="161"/>
        <end position="182"/>
    </location>
</feature>
<feature type="compositionally biased region" description="Basic residues" evidence="1">
    <location>
        <begin position="169"/>
        <end position="182"/>
    </location>
</feature>
<sequence length="182" mass="21420">MFANFRNCFKIKNSRLIYDNINKCLLTKEETNQLLKFIHLKWKPAKDQVQISFSRSSGPGGQNVNKLNTKVIVNLPFKQLESCIPMFLINHFKTCEMLRNYRIQNGIKIYSQKTRSQHKNIEDALNKISDLLNKSAETLYVPDTPPEKIARISILKKESNEKRLSEKKYKQKKKTQRRITMD</sequence>
<protein>
    <recommendedName>
        <fullName>Meiotically up-regulated gene 82 protein</fullName>
    </recommendedName>
</protein>
<organism>
    <name type="scientific">Schizosaccharomyces pombe (strain 972 / ATCC 24843)</name>
    <name type="common">Fission yeast</name>
    <dbReference type="NCBI Taxonomy" id="284812"/>
    <lineage>
        <taxon>Eukaryota</taxon>
        <taxon>Fungi</taxon>
        <taxon>Dikarya</taxon>
        <taxon>Ascomycota</taxon>
        <taxon>Taphrinomycotina</taxon>
        <taxon>Schizosaccharomycetes</taxon>
        <taxon>Schizosaccharomycetales</taxon>
        <taxon>Schizosaccharomycetaceae</taxon>
        <taxon>Schizosaccharomyces</taxon>
    </lineage>
</organism>
<name>MUG82_SCHPO</name>
<dbReference type="EMBL" id="CU329670">
    <property type="protein sequence ID" value="CAC19768.1"/>
    <property type="molecule type" value="Genomic_DNA"/>
</dbReference>
<dbReference type="RefSeq" id="NP_594059.1">
    <property type="nucleotide sequence ID" value="NM_001019483.1"/>
</dbReference>
<dbReference type="SMR" id="Q9HDZ3"/>
<dbReference type="BioGRID" id="277974">
    <property type="interactions" value="13"/>
</dbReference>
<dbReference type="ComplexPortal" id="CPX-10323">
    <property type="entry name" value="54S mitochondrial large ribosomal subunit"/>
</dbReference>
<dbReference type="FunCoup" id="Q9HDZ3">
    <property type="interactions" value="141"/>
</dbReference>
<dbReference type="STRING" id="284812.Q9HDZ3"/>
<dbReference type="PaxDb" id="4896-SPAC589.11.1"/>
<dbReference type="EnsemblFungi" id="SPAC589.11.1">
    <property type="protein sequence ID" value="SPAC589.11.1:pep"/>
    <property type="gene ID" value="SPAC589.11"/>
</dbReference>
<dbReference type="GeneID" id="2541472"/>
<dbReference type="KEGG" id="spo:2541472"/>
<dbReference type="PomBase" id="SPAC589.11"/>
<dbReference type="VEuPathDB" id="FungiDB:SPAC589.11"/>
<dbReference type="eggNOG" id="KOG3429">
    <property type="taxonomic scope" value="Eukaryota"/>
</dbReference>
<dbReference type="HOGENOM" id="CLU_089470_0_1_1"/>
<dbReference type="InParanoid" id="Q9HDZ3"/>
<dbReference type="OMA" id="GGQNVNC"/>
<dbReference type="PhylomeDB" id="Q9HDZ3"/>
<dbReference type="PRO" id="PR:Q9HDZ3"/>
<dbReference type="Proteomes" id="UP000002485">
    <property type="component" value="Chromosome I"/>
</dbReference>
<dbReference type="GO" id="GO:0005743">
    <property type="term" value="C:mitochondrial inner membrane"/>
    <property type="evidence" value="ECO:0000314"/>
    <property type="project" value="PomBase"/>
</dbReference>
<dbReference type="GO" id="GO:0005762">
    <property type="term" value="C:mitochondrial large ribosomal subunit"/>
    <property type="evidence" value="ECO:0000318"/>
    <property type="project" value="GO_Central"/>
</dbReference>
<dbReference type="GO" id="GO:0005739">
    <property type="term" value="C:mitochondrion"/>
    <property type="evidence" value="ECO:0007005"/>
    <property type="project" value="PomBase"/>
</dbReference>
<dbReference type="GO" id="GO:0004045">
    <property type="term" value="F:peptidyl-tRNA hydrolase activity"/>
    <property type="evidence" value="ECO:0000318"/>
    <property type="project" value="GO_Central"/>
</dbReference>
<dbReference type="GO" id="GO:0003747">
    <property type="term" value="F:translation release factor activity"/>
    <property type="evidence" value="ECO:0000269"/>
    <property type="project" value="PomBase"/>
</dbReference>
<dbReference type="GO" id="GO:0016150">
    <property type="term" value="F:translation release factor activity, codon nonspecific"/>
    <property type="evidence" value="ECO:0000318"/>
    <property type="project" value="GO_Central"/>
</dbReference>
<dbReference type="GO" id="GO:0051321">
    <property type="term" value="P:meiotic cell cycle"/>
    <property type="evidence" value="ECO:0007669"/>
    <property type="project" value="UniProtKB-KW"/>
</dbReference>
<dbReference type="GO" id="GO:0070126">
    <property type="term" value="P:mitochondrial translational termination"/>
    <property type="evidence" value="ECO:0000269"/>
    <property type="project" value="PomBase"/>
</dbReference>
<dbReference type="Gene3D" id="3.30.160.20">
    <property type="match status" value="1"/>
</dbReference>
<dbReference type="InterPro" id="IPR052104">
    <property type="entry name" value="Mito_Release_Factor_mL62"/>
</dbReference>
<dbReference type="InterPro" id="IPR000352">
    <property type="entry name" value="Pep_chain_release_fac_I"/>
</dbReference>
<dbReference type="InterPro" id="IPR045853">
    <property type="entry name" value="Pep_chain_release_fac_I_sf"/>
</dbReference>
<dbReference type="PANTHER" id="PTHR11075:SF54">
    <property type="entry name" value="LARGE RIBOSOMAL SUBUNIT PROTEIN ML62"/>
    <property type="match status" value="1"/>
</dbReference>
<dbReference type="PANTHER" id="PTHR11075">
    <property type="entry name" value="PEPTIDE CHAIN RELEASE FACTOR"/>
    <property type="match status" value="1"/>
</dbReference>
<dbReference type="Pfam" id="PF00472">
    <property type="entry name" value="RF-1"/>
    <property type="match status" value="1"/>
</dbReference>
<dbReference type="SUPFAM" id="SSF75620">
    <property type="entry name" value="Release factor"/>
    <property type="match status" value="1"/>
</dbReference>
<dbReference type="PROSITE" id="PS00745">
    <property type="entry name" value="RF_PROK_I"/>
    <property type="match status" value="1"/>
</dbReference>
<reference key="1">
    <citation type="journal article" date="2002" name="Nature">
        <title>The genome sequence of Schizosaccharomyces pombe.</title>
        <authorList>
            <person name="Wood V."/>
            <person name="Gwilliam R."/>
            <person name="Rajandream M.A."/>
            <person name="Lyne M.H."/>
            <person name="Lyne R."/>
            <person name="Stewart A."/>
            <person name="Sgouros J.G."/>
            <person name="Peat N."/>
            <person name="Hayles J."/>
            <person name="Baker S.G."/>
            <person name="Basham D."/>
            <person name="Bowman S."/>
            <person name="Brooks K."/>
            <person name="Brown D."/>
            <person name="Brown S."/>
            <person name="Chillingworth T."/>
            <person name="Churcher C.M."/>
            <person name="Collins M."/>
            <person name="Connor R."/>
            <person name="Cronin A."/>
            <person name="Davis P."/>
            <person name="Feltwell T."/>
            <person name="Fraser A."/>
            <person name="Gentles S."/>
            <person name="Goble A."/>
            <person name="Hamlin N."/>
            <person name="Harris D.E."/>
            <person name="Hidalgo J."/>
            <person name="Hodgson G."/>
            <person name="Holroyd S."/>
            <person name="Hornsby T."/>
            <person name="Howarth S."/>
            <person name="Huckle E.J."/>
            <person name="Hunt S."/>
            <person name="Jagels K."/>
            <person name="James K.D."/>
            <person name="Jones L."/>
            <person name="Jones M."/>
            <person name="Leather S."/>
            <person name="McDonald S."/>
            <person name="McLean J."/>
            <person name="Mooney P."/>
            <person name="Moule S."/>
            <person name="Mungall K.L."/>
            <person name="Murphy L.D."/>
            <person name="Niblett D."/>
            <person name="Odell C."/>
            <person name="Oliver K."/>
            <person name="O'Neil S."/>
            <person name="Pearson D."/>
            <person name="Quail M.A."/>
            <person name="Rabbinowitsch E."/>
            <person name="Rutherford K.M."/>
            <person name="Rutter S."/>
            <person name="Saunders D."/>
            <person name="Seeger K."/>
            <person name="Sharp S."/>
            <person name="Skelton J."/>
            <person name="Simmonds M.N."/>
            <person name="Squares R."/>
            <person name="Squares S."/>
            <person name="Stevens K."/>
            <person name="Taylor K."/>
            <person name="Taylor R.G."/>
            <person name="Tivey A."/>
            <person name="Walsh S.V."/>
            <person name="Warren T."/>
            <person name="Whitehead S."/>
            <person name="Woodward J.R."/>
            <person name="Volckaert G."/>
            <person name="Aert R."/>
            <person name="Robben J."/>
            <person name="Grymonprez B."/>
            <person name="Weltjens I."/>
            <person name="Vanstreels E."/>
            <person name="Rieger M."/>
            <person name="Schaefer M."/>
            <person name="Mueller-Auer S."/>
            <person name="Gabel C."/>
            <person name="Fuchs M."/>
            <person name="Duesterhoeft A."/>
            <person name="Fritzc C."/>
            <person name="Holzer E."/>
            <person name="Moestl D."/>
            <person name="Hilbert H."/>
            <person name="Borzym K."/>
            <person name="Langer I."/>
            <person name="Beck A."/>
            <person name="Lehrach H."/>
            <person name="Reinhardt R."/>
            <person name="Pohl T.M."/>
            <person name="Eger P."/>
            <person name="Zimmermann W."/>
            <person name="Wedler H."/>
            <person name="Wambutt R."/>
            <person name="Purnelle B."/>
            <person name="Goffeau A."/>
            <person name="Cadieu E."/>
            <person name="Dreano S."/>
            <person name="Gloux S."/>
            <person name="Lelaure V."/>
            <person name="Mottier S."/>
            <person name="Galibert F."/>
            <person name="Aves S.J."/>
            <person name="Xiang Z."/>
            <person name="Hunt C."/>
            <person name="Moore K."/>
            <person name="Hurst S.M."/>
            <person name="Lucas M."/>
            <person name="Rochet M."/>
            <person name="Gaillardin C."/>
            <person name="Tallada V.A."/>
            <person name="Garzon A."/>
            <person name="Thode G."/>
            <person name="Daga R.R."/>
            <person name="Cruzado L."/>
            <person name="Jimenez J."/>
            <person name="Sanchez M."/>
            <person name="del Rey F."/>
            <person name="Benito J."/>
            <person name="Dominguez A."/>
            <person name="Revuelta J.L."/>
            <person name="Moreno S."/>
            <person name="Armstrong J."/>
            <person name="Forsburg S.L."/>
            <person name="Cerutti L."/>
            <person name="Lowe T."/>
            <person name="McCombie W.R."/>
            <person name="Paulsen I."/>
            <person name="Potashkin J."/>
            <person name="Shpakovski G.V."/>
            <person name="Ussery D."/>
            <person name="Barrell B.G."/>
            <person name="Nurse P."/>
        </authorList>
    </citation>
    <scope>NUCLEOTIDE SEQUENCE [LARGE SCALE GENOMIC DNA]</scope>
    <source>
        <strain>972 / ATCC 24843</strain>
    </source>
</reference>
<reference key="2">
    <citation type="journal article" date="2005" name="Curr. Biol.">
        <title>A large-scale screen in S. pombe identifies seven novel genes required for critical meiotic events.</title>
        <authorList>
            <person name="Martin-Castellanos C."/>
            <person name="Blanco M."/>
            <person name="Rozalen A.E."/>
            <person name="Perez-Hidalgo L."/>
            <person name="Garcia A.I."/>
            <person name="Conde F."/>
            <person name="Mata J."/>
            <person name="Ellermeier C."/>
            <person name="Davis L."/>
            <person name="San-Segundo P."/>
            <person name="Smith G.R."/>
            <person name="Moreno S."/>
        </authorList>
    </citation>
    <scope>FUNCTION IN MEIOSIS</scope>
</reference>
<reference key="3">
    <citation type="journal article" date="2006" name="Nat. Biotechnol.">
        <title>ORFeome cloning and global analysis of protein localization in the fission yeast Schizosaccharomyces pombe.</title>
        <authorList>
            <person name="Matsuyama A."/>
            <person name="Arai R."/>
            <person name="Yashiroda Y."/>
            <person name="Shirai A."/>
            <person name="Kamata A."/>
            <person name="Sekido S."/>
            <person name="Kobayashi Y."/>
            <person name="Hashimoto A."/>
            <person name="Hamamoto M."/>
            <person name="Hiraoka Y."/>
            <person name="Horinouchi S."/>
            <person name="Yoshida M."/>
        </authorList>
    </citation>
    <scope>SUBCELLULAR LOCATION [LARGE SCALE ANALYSIS]</scope>
</reference>
<gene>
    <name type="primary">mug82</name>
    <name type="ORF">SPAC589.11</name>
</gene>
<proteinExistence type="evidence at protein level"/>
<evidence type="ECO:0000256" key="1">
    <source>
        <dbReference type="SAM" id="MobiDB-lite"/>
    </source>
</evidence>
<evidence type="ECO:0000269" key="2">
    <source>
    </source>
</evidence>
<evidence type="ECO:0000269" key="3">
    <source>
    </source>
</evidence>
<evidence type="ECO:0000305" key="4"/>
<keyword id="KW-0469">Meiosis</keyword>
<keyword id="KW-0496">Mitochondrion</keyword>
<keyword id="KW-1185">Reference proteome</keyword>